<reference key="1">
    <citation type="journal article" date="2002" name="Parasitology">
        <title>cDNA cloning, expression and characterization of a Boophilus microplus paramyosin.</title>
        <authorList>
            <person name="Ferreira C.A."/>
            <person name="Barbosa M.C."/>
            <person name="Silveira T.C."/>
            <person name="Valenzuela J.G."/>
            <person name="Da Silva Vaz I. Jr."/>
            <person name="Masuda A."/>
        </authorList>
    </citation>
    <scope>NUCLEOTIDE SEQUENCE [MRNA]</scope>
    <scope>TISSUE SPECIFICITY</scope>
    <scope>INTERACTION WITH IGG AND COLLAGEN</scope>
</reference>
<organism>
    <name type="scientific">Rhipicephalus microplus</name>
    <name type="common">Cattle tick</name>
    <name type="synonym">Boophilus microplus</name>
    <dbReference type="NCBI Taxonomy" id="6941"/>
    <lineage>
        <taxon>Eukaryota</taxon>
        <taxon>Metazoa</taxon>
        <taxon>Ecdysozoa</taxon>
        <taxon>Arthropoda</taxon>
        <taxon>Chelicerata</taxon>
        <taxon>Arachnida</taxon>
        <taxon>Acari</taxon>
        <taxon>Parasitiformes</taxon>
        <taxon>Ixodida</taxon>
        <taxon>Ixodoidea</taxon>
        <taxon>Ixodidae</taxon>
        <taxon>Rhipicephalinae</taxon>
        <taxon>Rhipicephalus</taxon>
        <taxon>Boophilus</taxon>
    </lineage>
</organism>
<name>MYSP_RHIMP</name>
<feature type="chain" id="PRO_0000211244" description="Paramyosin">
    <location>
        <begin position="1"/>
        <end position="873"/>
    </location>
</feature>
<feature type="region of interest" description="Nonhelical region" evidence="2">
    <location>
        <begin position="1"/>
        <end position="25"/>
    </location>
</feature>
<feature type="region of interest" description="Nonhelical region" evidence="2">
    <location>
        <begin position="853"/>
        <end position="873"/>
    </location>
</feature>
<feature type="coiled-coil region" evidence="2">
    <location>
        <begin position="26"/>
        <end position="852"/>
    </location>
</feature>
<keyword id="KW-0175">Coiled coil</keyword>
<keyword id="KW-0963">Cytoplasm</keyword>
<keyword id="KW-0505">Motor protein</keyword>
<keyword id="KW-0514">Muscle protein</keyword>
<keyword id="KW-0518">Myosin</keyword>
<keyword id="KW-0787">Thick filament</keyword>
<gene>
    <name type="primary">PRM</name>
</gene>
<proteinExistence type="evidence at protein level"/>
<sequence length="873" mass="101992">MSSRSSKYMYKSSGGAGDISIEYGTDLGALTRLEDKLRLLQEDLESERELRQRIEREKSDLTVQLMQLSDRLEEAEGSSETVVEMNKKRDTELSKLRKLLEDVHLESEETAHHLRKKHQEAVAEMQEQMDLMTKAKSKAEKERQKFQAEVYELLAQVENTNKEKITIQKTVEKLEHTVYELNIRIEELNRTVTEVTAQRTRLSAENAEYLKEVHELKVSLDNVNHLKSQLATQLEDTRRRLEDEERKRASLESSMHTLEVEIESLKVQLEEESEARLEVERQLVKANADAAAYKTKYETEVQAHADEVEELRRKMAQKISEYEEQLEALLTRCSNLEKQKSRLQSEVEVLIMDLEKATAHAQNLEKRVAQLEKLNIDLKSKVEELTILLEQSQRELRQKVAEIQKLQHEYEKMREQRDALQRENKKLVDDLSEAKSQLADAIRRLHEYELEIKRLENERDELAAAYKEAETLRKQEEAKCQRLTAELAQVRHEYERRLQIKEEEIEALRKQYQLEVEQLNMRLAEAEAKLKTEIARIKKKYQAQITELEMSLDAANKQNMDLQKIIKKQAIQITELQAHYDEVHRQLQQCADQLAISQRRCQGLQAELDEQRVALESALRSKRAAEQSLEESQARVNELTTINVNIAAAKNKLESELSALQADYDELHKELRVVDERCQRTIVELKSTKDILVEEQERYIKVESIKKSLEVEVRNLQVRLEEVEANALAGGKRVIAKLEARIRDVEIELEEEKKRHAETQKILRKKDHRAKELLLQTEEDHKTITMLNDAVEKLNEKVKVYKRQLNEQEGLSQQNLTRVRRFQRELEAAEDRADSAESNLSLIRAKHRSWVTTSQVPGGTRQVFVTEESSQNF</sequence>
<dbReference type="EMBL" id="AF479582">
    <property type="protein sequence ID" value="AAO20875.1"/>
    <property type="molecule type" value="mRNA"/>
</dbReference>
<dbReference type="SMR" id="Q86RN8"/>
<dbReference type="VEuPathDB" id="VectorBase:LOC119177055"/>
<dbReference type="OrthoDB" id="2018427at2759"/>
<dbReference type="GO" id="GO:0005923">
    <property type="term" value="C:bicellular tight junction"/>
    <property type="evidence" value="ECO:0007669"/>
    <property type="project" value="TreeGrafter"/>
</dbReference>
<dbReference type="GO" id="GO:0030016">
    <property type="term" value="C:myofibril"/>
    <property type="evidence" value="ECO:0007669"/>
    <property type="project" value="UniProtKB-SubCell"/>
</dbReference>
<dbReference type="GO" id="GO:0016459">
    <property type="term" value="C:myosin complex"/>
    <property type="evidence" value="ECO:0007669"/>
    <property type="project" value="UniProtKB-KW"/>
</dbReference>
<dbReference type="GO" id="GO:0032982">
    <property type="term" value="C:myosin filament"/>
    <property type="evidence" value="ECO:0007669"/>
    <property type="project" value="UniProtKB-KW"/>
</dbReference>
<dbReference type="FunFam" id="1.20.5.340:FF:000035">
    <property type="entry name" value="Paramyosin, long form"/>
    <property type="match status" value="1"/>
</dbReference>
<dbReference type="Gene3D" id="1.20.5.340">
    <property type="match status" value="2"/>
</dbReference>
<dbReference type="Gene3D" id="1.20.5.370">
    <property type="match status" value="1"/>
</dbReference>
<dbReference type="Gene3D" id="1.20.5.1160">
    <property type="entry name" value="Vasodilator-stimulated phosphoprotein"/>
    <property type="match status" value="1"/>
</dbReference>
<dbReference type="InterPro" id="IPR002928">
    <property type="entry name" value="Myosin_tail"/>
</dbReference>
<dbReference type="InterPro" id="IPR014751">
    <property type="entry name" value="XRCC4-like_C"/>
</dbReference>
<dbReference type="PANTHER" id="PTHR46349">
    <property type="entry name" value="CINGULIN-LIKE PROTEIN 1-RELATED"/>
    <property type="match status" value="1"/>
</dbReference>
<dbReference type="PANTHER" id="PTHR46349:SF7">
    <property type="entry name" value="MYOSIN TAIL DOMAIN-CONTAINING PROTEIN"/>
    <property type="match status" value="1"/>
</dbReference>
<dbReference type="Pfam" id="PF01576">
    <property type="entry name" value="Myosin_tail_1"/>
    <property type="match status" value="1"/>
</dbReference>
<dbReference type="SUPFAM" id="SSF90257">
    <property type="entry name" value="Myosin rod fragments"/>
    <property type="match status" value="3"/>
</dbReference>
<evidence type="ECO:0000250" key="1"/>
<evidence type="ECO:0000255" key="2"/>
<evidence type="ECO:0000269" key="3">
    <source>
    </source>
</evidence>
<evidence type="ECO:0000305" key="4"/>
<comment type="function">
    <text>Paramyosin is a major structural component of many thick filaments isolated from invertebrate muscles.</text>
</comment>
<comment type="subunit">
    <text evidence="1">Homodimer (By similarity). Binds IgG and collagen.</text>
</comment>
<comment type="subcellular location">
    <subcellularLocation>
        <location>Cytoplasm</location>
        <location>Myofibril</location>
    </subcellularLocation>
    <text>Thick filaments of the myofibrils.</text>
</comment>
<comment type="tissue specificity">
    <text evidence="3">Expressed in all tissues except in saliva.</text>
</comment>
<comment type="similarity">
    <text evidence="4">Belongs to the paramyosin family.</text>
</comment>
<accession>Q86RN8</accession>
<protein>
    <recommendedName>
        <fullName>Paramyosin</fullName>
    </recommendedName>
</protein>